<evidence type="ECO:0000255" key="1">
    <source>
        <dbReference type="HAMAP-Rule" id="MF_00129"/>
    </source>
</evidence>
<organism>
    <name type="scientific">Salmonella schwarzengrund (strain CVM19633)</name>
    <dbReference type="NCBI Taxonomy" id="439843"/>
    <lineage>
        <taxon>Bacteria</taxon>
        <taxon>Pseudomonadati</taxon>
        <taxon>Pseudomonadota</taxon>
        <taxon>Gammaproteobacteria</taxon>
        <taxon>Enterobacterales</taxon>
        <taxon>Enterobacteriaceae</taxon>
        <taxon>Salmonella</taxon>
    </lineage>
</organism>
<protein>
    <recommendedName>
        <fullName evidence="1">tRNA uridine 5-carboxymethylaminomethyl modification enzyme MnmG</fullName>
    </recommendedName>
    <alternativeName>
        <fullName evidence="1">Glucose-inhibited division protein A</fullName>
    </alternativeName>
</protein>
<accession>B4TN42</accession>
<keyword id="KW-0963">Cytoplasm</keyword>
<keyword id="KW-0274">FAD</keyword>
<keyword id="KW-0285">Flavoprotein</keyword>
<keyword id="KW-0520">NAD</keyword>
<keyword id="KW-0819">tRNA processing</keyword>
<dbReference type="EMBL" id="CP001127">
    <property type="protein sequence ID" value="ACF92088.1"/>
    <property type="molecule type" value="Genomic_DNA"/>
</dbReference>
<dbReference type="RefSeq" id="WP_000499873.1">
    <property type="nucleotide sequence ID" value="NC_011094.1"/>
</dbReference>
<dbReference type="SMR" id="B4TN42"/>
<dbReference type="KEGG" id="sew:SeSA_A4086"/>
<dbReference type="HOGENOM" id="CLU_007831_2_2_6"/>
<dbReference type="Proteomes" id="UP000001865">
    <property type="component" value="Chromosome"/>
</dbReference>
<dbReference type="GO" id="GO:0005829">
    <property type="term" value="C:cytosol"/>
    <property type="evidence" value="ECO:0007669"/>
    <property type="project" value="TreeGrafter"/>
</dbReference>
<dbReference type="GO" id="GO:0050660">
    <property type="term" value="F:flavin adenine dinucleotide binding"/>
    <property type="evidence" value="ECO:0007669"/>
    <property type="project" value="UniProtKB-UniRule"/>
</dbReference>
<dbReference type="GO" id="GO:0030488">
    <property type="term" value="P:tRNA methylation"/>
    <property type="evidence" value="ECO:0007669"/>
    <property type="project" value="TreeGrafter"/>
</dbReference>
<dbReference type="GO" id="GO:0002098">
    <property type="term" value="P:tRNA wobble uridine modification"/>
    <property type="evidence" value="ECO:0007669"/>
    <property type="project" value="InterPro"/>
</dbReference>
<dbReference type="FunFam" id="1.10.10.1800:FF:000001">
    <property type="entry name" value="tRNA uridine 5-carboxymethylaminomethyl modification enzyme MnmG"/>
    <property type="match status" value="1"/>
</dbReference>
<dbReference type="FunFam" id="1.10.150.570:FF:000001">
    <property type="entry name" value="tRNA uridine 5-carboxymethylaminomethyl modification enzyme MnmG"/>
    <property type="match status" value="1"/>
</dbReference>
<dbReference type="FunFam" id="3.50.50.60:FF:000002">
    <property type="entry name" value="tRNA uridine 5-carboxymethylaminomethyl modification enzyme MnmG"/>
    <property type="match status" value="1"/>
</dbReference>
<dbReference type="FunFam" id="3.50.50.60:FF:000010">
    <property type="entry name" value="tRNA uridine 5-carboxymethylaminomethyl modification enzyme MnmG"/>
    <property type="match status" value="1"/>
</dbReference>
<dbReference type="Gene3D" id="3.50.50.60">
    <property type="entry name" value="FAD/NAD(P)-binding domain"/>
    <property type="match status" value="2"/>
</dbReference>
<dbReference type="Gene3D" id="1.10.150.570">
    <property type="entry name" value="GidA associated domain, C-terminal subdomain"/>
    <property type="match status" value="1"/>
</dbReference>
<dbReference type="Gene3D" id="1.10.10.1800">
    <property type="entry name" value="tRNA uridine 5-carboxymethylaminomethyl modification enzyme MnmG/GidA"/>
    <property type="match status" value="1"/>
</dbReference>
<dbReference type="HAMAP" id="MF_00129">
    <property type="entry name" value="MnmG_GidA"/>
    <property type="match status" value="1"/>
</dbReference>
<dbReference type="InterPro" id="IPR036188">
    <property type="entry name" value="FAD/NAD-bd_sf"/>
</dbReference>
<dbReference type="InterPro" id="IPR049312">
    <property type="entry name" value="GIDA_C_N"/>
</dbReference>
<dbReference type="InterPro" id="IPR004416">
    <property type="entry name" value="MnmG"/>
</dbReference>
<dbReference type="InterPro" id="IPR002218">
    <property type="entry name" value="MnmG-rel"/>
</dbReference>
<dbReference type="InterPro" id="IPR020595">
    <property type="entry name" value="MnmG-rel_CS"/>
</dbReference>
<dbReference type="InterPro" id="IPR026904">
    <property type="entry name" value="MnmG_C"/>
</dbReference>
<dbReference type="InterPro" id="IPR047001">
    <property type="entry name" value="MnmG_C_subdom"/>
</dbReference>
<dbReference type="InterPro" id="IPR044920">
    <property type="entry name" value="MnmG_C_subdom_sf"/>
</dbReference>
<dbReference type="InterPro" id="IPR040131">
    <property type="entry name" value="MnmG_N"/>
</dbReference>
<dbReference type="NCBIfam" id="TIGR00136">
    <property type="entry name" value="mnmG_gidA"/>
    <property type="match status" value="1"/>
</dbReference>
<dbReference type="PANTHER" id="PTHR11806">
    <property type="entry name" value="GLUCOSE INHIBITED DIVISION PROTEIN A"/>
    <property type="match status" value="1"/>
</dbReference>
<dbReference type="PANTHER" id="PTHR11806:SF0">
    <property type="entry name" value="PROTEIN MTO1 HOMOLOG, MITOCHONDRIAL"/>
    <property type="match status" value="1"/>
</dbReference>
<dbReference type="Pfam" id="PF01134">
    <property type="entry name" value="GIDA"/>
    <property type="match status" value="1"/>
</dbReference>
<dbReference type="Pfam" id="PF21680">
    <property type="entry name" value="GIDA_C_1st"/>
    <property type="match status" value="1"/>
</dbReference>
<dbReference type="Pfam" id="PF13932">
    <property type="entry name" value="SAM_GIDA_C"/>
    <property type="match status" value="1"/>
</dbReference>
<dbReference type="SMART" id="SM01228">
    <property type="entry name" value="GIDA_assoc_3"/>
    <property type="match status" value="1"/>
</dbReference>
<dbReference type="SUPFAM" id="SSF51905">
    <property type="entry name" value="FAD/NAD(P)-binding domain"/>
    <property type="match status" value="1"/>
</dbReference>
<dbReference type="PROSITE" id="PS01280">
    <property type="entry name" value="GIDA_1"/>
    <property type="match status" value="1"/>
</dbReference>
<dbReference type="PROSITE" id="PS01281">
    <property type="entry name" value="GIDA_2"/>
    <property type="match status" value="1"/>
</dbReference>
<gene>
    <name evidence="1" type="primary">mnmG</name>
    <name evidence="1" type="synonym">gidA</name>
    <name type="ordered locus">SeSA_A4086</name>
</gene>
<sequence>MFYQDPFDVIIIGGGHAGTEAAMAAARMGQQTLLLTHNIDTLGQMSCNPAIGGIGKGHLVKEVDALGGLMAKAIDQAGIQFRILNASKGPAVRATRAQADRVLYRQAVRTALENQPNLMIFQQAVEDLIVENDRVVGAVTQMGLKFRAKAVVLTVGTFLDGKIHIGLDNYSGGRAGDPPSIPLSRRLRELPLRVSRLKTGTPPRIDARTIDFSVLAQQHGDNPMPVFSFMGNASQHPQQVPCYITHTNEKTHDVIRNNLDRSPMYAGVIEGIGPRYCPSIEDKVMRFADRNQHQIFLEPEGLTSNEIYPNGISTSLPFDVQMQIVRSMQGMENAKIVRPGYAIEYDFFDPRDLKPTLESKFIHGLFFAGQINGTTGYEEAAAQGLLAGLNAARLSADKEGWAPARSQAYLGVLVDDLCTLGTKEPYRMFTSRAEYRLMLREDNADLRLTEMGRELGLVDDERWARFNEKLENIERERQRLKSTWVTPSAESADEVNTHLTTPLSREASGEDLLRRPEMTYAQLTSLAAFAPALEDEQAAEQVEIQVKYEGYIARQQDEIEKQLRNENTLLPATLDYRQVSGLSNEVIAKLNDHKPASIGQASRISGVTPAAISILLVWLKKQGMLRRSA</sequence>
<comment type="function">
    <text evidence="1">NAD-binding protein involved in the addition of a carboxymethylaminomethyl (cmnm) group at the wobble position (U34) of certain tRNAs, forming tRNA-cmnm(5)s(2)U34.</text>
</comment>
<comment type="cofactor">
    <cofactor evidence="1">
        <name>FAD</name>
        <dbReference type="ChEBI" id="CHEBI:57692"/>
    </cofactor>
</comment>
<comment type="subunit">
    <text evidence="1">Homodimer. Heterotetramer of two MnmE and two MnmG subunits.</text>
</comment>
<comment type="subcellular location">
    <subcellularLocation>
        <location evidence="1">Cytoplasm</location>
    </subcellularLocation>
</comment>
<comment type="similarity">
    <text evidence="1">Belongs to the MnmG family.</text>
</comment>
<name>MNMG_SALSV</name>
<proteinExistence type="inferred from homology"/>
<feature type="chain" id="PRO_1000095666" description="tRNA uridine 5-carboxymethylaminomethyl modification enzyme MnmG">
    <location>
        <begin position="1"/>
        <end position="629"/>
    </location>
</feature>
<feature type="binding site" evidence="1">
    <location>
        <begin position="13"/>
        <end position="18"/>
    </location>
    <ligand>
        <name>FAD</name>
        <dbReference type="ChEBI" id="CHEBI:57692"/>
    </ligand>
</feature>
<feature type="binding site" evidence="1">
    <location>
        <position position="125"/>
    </location>
    <ligand>
        <name>FAD</name>
        <dbReference type="ChEBI" id="CHEBI:57692"/>
    </ligand>
</feature>
<feature type="binding site" evidence="1">
    <location>
        <position position="180"/>
    </location>
    <ligand>
        <name>FAD</name>
        <dbReference type="ChEBI" id="CHEBI:57692"/>
    </ligand>
</feature>
<feature type="binding site" evidence="1">
    <location>
        <begin position="273"/>
        <end position="287"/>
    </location>
    <ligand>
        <name>NAD(+)</name>
        <dbReference type="ChEBI" id="CHEBI:57540"/>
    </ligand>
</feature>
<feature type="binding site" evidence="1">
    <location>
        <position position="370"/>
    </location>
    <ligand>
        <name>FAD</name>
        <dbReference type="ChEBI" id="CHEBI:57692"/>
    </ligand>
</feature>
<reference key="1">
    <citation type="journal article" date="2011" name="J. Bacteriol.">
        <title>Comparative genomics of 28 Salmonella enterica isolates: evidence for CRISPR-mediated adaptive sublineage evolution.</title>
        <authorList>
            <person name="Fricke W.F."/>
            <person name="Mammel M.K."/>
            <person name="McDermott P.F."/>
            <person name="Tartera C."/>
            <person name="White D.G."/>
            <person name="Leclerc J.E."/>
            <person name="Ravel J."/>
            <person name="Cebula T.A."/>
        </authorList>
    </citation>
    <scope>NUCLEOTIDE SEQUENCE [LARGE SCALE GENOMIC DNA]</scope>
    <source>
        <strain>CVM19633</strain>
    </source>
</reference>